<sequence length="640" mass="70201">MGKIIGIDLGTTNSVVAVMEGGEPKVIINPEGSRVTPSVVAFTADGEPLVGAPAKRQAITNPKNTIFSIKRFMGRFYDEVTEEISMVPYKVVRGENNTVRVEVEVGGEKRLYTPQEISAMILQKLKQTAEEYLGVPVTEAVITVPAYFNDAQRKATKEAGEIAGLKVRRILNEPTAAALAYGLDKKDKELKIAVYDLGGGTYDISILELGDGVFEVKATNGDTHLGGDNFDQRLIDYIADEFQKQEGIDLRKDPMALQRLKEAAEKAKIELSSAMKTTVNLPFITATAEGPKHLVMEITRAKFEQLIEDLVARTIPPMEQALKDAKLRKEDIDEVILVGGSTRIPLVQRTVEEFFGKKANKSVNPDEVVAIGAAIQAGVLSGEVQDVLLLDVTPLNLGIETLGGVMTVLIPANTTIPTRKSEIFTTASDNQTSVEIHVLQGNREMAADNRSLGRFILDGIPPAPRGVPQIEVTFDIDANGILHVSARDKATGKEQSIRIEASSGLTPEEIERMREEARRHAAEDRKRREQIEKLNQADSLIYMTEKNLREYGDKLPADKRAKIESALERLKEVHKARNFDELDSAIAQLNQAWNEASQDLYRAQQAAGAQTSDGASAQADSGGVREADYEVIDEDDKDKQ</sequence>
<comment type="function">
    <text evidence="1">Acts as a chaperone.</text>
</comment>
<comment type="induction">
    <text evidence="1">By stress conditions e.g. heat shock (By similarity).</text>
</comment>
<comment type="similarity">
    <text evidence="3">Belongs to the heat shock protein 70 family.</text>
</comment>
<organism>
    <name type="scientific">Rhodothermus marinus</name>
    <name type="common">Rhodothermus obamensis</name>
    <dbReference type="NCBI Taxonomy" id="29549"/>
    <lineage>
        <taxon>Bacteria</taxon>
        <taxon>Pseudomonadati</taxon>
        <taxon>Rhodothermota</taxon>
        <taxon>Rhodothermia</taxon>
        <taxon>Rhodothermales</taxon>
        <taxon>Rhodothermaceae</taxon>
        <taxon>Rhodothermus</taxon>
    </lineage>
</organism>
<dbReference type="EMBL" id="AF145251">
    <property type="protein sequence ID" value="AAD37974.1"/>
    <property type="molecule type" value="Genomic_DNA"/>
</dbReference>
<dbReference type="SMR" id="Q9XCB1"/>
<dbReference type="GO" id="GO:0005524">
    <property type="term" value="F:ATP binding"/>
    <property type="evidence" value="ECO:0007669"/>
    <property type="project" value="UniProtKB-UniRule"/>
</dbReference>
<dbReference type="GO" id="GO:0140662">
    <property type="term" value="F:ATP-dependent protein folding chaperone"/>
    <property type="evidence" value="ECO:0007669"/>
    <property type="project" value="InterPro"/>
</dbReference>
<dbReference type="GO" id="GO:0051082">
    <property type="term" value="F:unfolded protein binding"/>
    <property type="evidence" value="ECO:0007669"/>
    <property type="project" value="InterPro"/>
</dbReference>
<dbReference type="CDD" id="cd10234">
    <property type="entry name" value="ASKHA_NBD_HSP70_DnaK-like"/>
    <property type="match status" value="1"/>
</dbReference>
<dbReference type="FunFam" id="2.60.34.10:FF:000014">
    <property type="entry name" value="Chaperone protein DnaK HSP70"/>
    <property type="match status" value="1"/>
</dbReference>
<dbReference type="FunFam" id="3.30.420.40:FF:000020">
    <property type="entry name" value="Chaperone protein HscA homolog"/>
    <property type="match status" value="1"/>
</dbReference>
<dbReference type="FunFam" id="3.30.30.30:FF:000005">
    <property type="entry name" value="Heat shock protein ssb1"/>
    <property type="match status" value="1"/>
</dbReference>
<dbReference type="FunFam" id="1.20.1270.10:FF:000001">
    <property type="entry name" value="Molecular chaperone DnaK"/>
    <property type="match status" value="1"/>
</dbReference>
<dbReference type="FunFam" id="3.30.420.40:FF:000004">
    <property type="entry name" value="Molecular chaperone DnaK"/>
    <property type="match status" value="1"/>
</dbReference>
<dbReference type="FunFam" id="3.90.640.10:FF:000003">
    <property type="entry name" value="Molecular chaperone DnaK"/>
    <property type="match status" value="1"/>
</dbReference>
<dbReference type="Gene3D" id="1.20.1270.10">
    <property type="match status" value="1"/>
</dbReference>
<dbReference type="Gene3D" id="3.30.420.40">
    <property type="match status" value="2"/>
</dbReference>
<dbReference type="Gene3D" id="3.90.640.10">
    <property type="entry name" value="Actin, Chain A, domain 4"/>
    <property type="match status" value="1"/>
</dbReference>
<dbReference type="Gene3D" id="2.60.34.10">
    <property type="entry name" value="Substrate Binding Domain Of DNAk, Chain A, domain 1"/>
    <property type="match status" value="1"/>
</dbReference>
<dbReference type="HAMAP" id="MF_00332">
    <property type="entry name" value="DnaK"/>
    <property type="match status" value="1"/>
</dbReference>
<dbReference type="InterPro" id="IPR043129">
    <property type="entry name" value="ATPase_NBD"/>
</dbReference>
<dbReference type="InterPro" id="IPR012725">
    <property type="entry name" value="Chaperone_DnaK"/>
</dbReference>
<dbReference type="InterPro" id="IPR018181">
    <property type="entry name" value="Heat_shock_70_CS"/>
</dbReference>
<dbReference type="InterPro" id="IPR029048">
    <property type="entry name" value="HSP70_C_sf"/>
</dbReference>
<dbReference type="InterPro" id="IPR029047">
    <property type="entry name" value="HSP70_peptide-bd_sf"/>
</dbReference>
<dbReference type="InterPro" id="IPR013126">
    <property type="entry name" value="Hsp_70_fam"/>
</dbReference>
<dbReference type="NCBIfam" id="NF001413">
    <property type="entry name" value="PRK00290.1"/>
    <property type="match status" value="1"/>
</dbReference>
<dbReference type="NCBIfam" id="NF003520">
    <property type="entry name" value="PRK05183.1"/>
    <property type="match status" value="1"/>
</dbReference>
<dbReference type="NCBIfam" id="TIGR02350">
    <property type="entry name" value="prok_dnaK"/>
    <property type="match status" value="1"/>
</dbReference>
<dbReference type="PANTHER" id="PTHR19375">
    <property type="entry name" value="HEAT SHOCK PROTEIN 70KDA"/>
    <property type="match status" value="1"/>
</dbReference>
<dbReference type="Pfam" id="PF00012">
    <property type="entry name" value="HSP70"/>
    <property type="match status" value="1"/>
</dbReference>
<dbReference type="PRINTS" id="PR00301">
    <property type="entry name" value="HEATSHOCK70"/>
</dbReference>
<dbReference type="SUPFAM" id="SSF53067">
    <property type="entry name" value="Actin-like ATPase domain"/>
    <property type="match status" value="2"/>
</dbReference>
<dbReference type="SUPFAM" id="SSF100920">
    <property type="entry name" value="Heat shock protein 70kD (HSP70), peptide-binding domain"/>
    <property type="match status" value="1"/>
</dbReference>
<dbReference type="PROSITE" id="PS00297">
    <property type="entry name" value="HSP70_1"/>
    <property type="match status" value="1"/>
</dbReference>
<dbReference type="PROSITE" id="PS00329">
    <property type="entry name" value="HSP70_2"/>
    <property type="match status" value="1"/>
</dbReference>
<dbReference type="PROSITE" id="PS01036">
    <property type="entry name" value="HSP70_3"/>
    <property type="match status" value="1"/>
</dbReference>
<proteinExistence type="inferred from homology"/>
<evidence type="ECO:0000250" key="1"/>
<evidence type="ECO:0000256" key="2">
    <source>
        <dbReference type="SAM" id="MobiDB-lite"/>
    </source>
</evidence>
<evidence type="ECO:0000305" key="3"/>
<name>DNAK_RHOMR</name>
<feature type="chain" id="PRO_0000078527" description="Chaperone protein DnaK">
    <location>
        <begin position="1"/>
        <end position="640"/>
    </location>
</feature>
<feature type="region of interest" description="Disordered" evidence="2">
    <location>
        <begin position="600"/>
        <end position="640"/>
    </location>
</feature>
<feature type="compositionally biased region" description="Polar residues" evidence="2">
    <location>
        <begin position="607"/>
        <end position="619"/>
    </location>
</feature>
<feature type="compositionally biased region" description="Acidic residues" evidence="2">
    <location>
        <begin position="629"/>
        <end position="640"/>
    </location>
</feature>
<feature type="modified residue" description="Phosphothreonine; by autocatalysis" evidence="1">
    <location>
        <position position="201"/>
    </location>
</feature>
<reference key="1">
    <citation type="submission" date="1999-04" db="EMBL/GenBank/DDBJ databases">
        <title>Heat shock in Rhodothermus marinus: cloning and sequence analysis of the groESL, dnaK and dnaJ genes.</title>
        <authorList>
            <person name="Thorolfsdottir E.T.T."/>
            <person name="Backman V.M."/>
            <person name="Blondal T."/>
            <person name="Thorbjarnardottir S.H."/>
            <person name="Palsdottir A."/>
            <person name="Hauksdottir H."/>
            <person name="Kristjansdottir S."/>
            <person name="Eggertsson G."/>
        </authorList>
    </citation>
    <scope>NUCLEOTIDE SEQUENCE [GENOMIC DNA]</scope>
    <source>
        <strain>ITI 376</strain>
    </source>
</reference>
<gene>
    <name type="primary">dnaK</name>
</gene>
<keyword id="KW-0067">ATP-binding</keyword>
<keyword id="KW-0143">Chaperone</keyword>
<keyword id="KW-0547">Nucleotide-binding</keyword>
<keyword id="KW-0597">Phosphoprotein</keyword>
<keyword id="KW-0346">Stress response</keyword>
<accession>Q9XCB1</accession>
<protein>
    <recommendedName>
        <fullName>Chaperone protein DnaK</fullName>
    </recommendedName>
    <alternativeName>
        <fullName>HSP70</fullName>
    </alternativeName>
    <alternativeName>
        <fullName>Heat shock 70 kDa protein</fullName>
    </alternativeName>
    <alternativeName>
        <fullName>Heat shock protein 70</fullName>
    </alternativeName>
</protein>